<dbReference type="EC" id="3.4.19.12"/>
<dbReference type="EMBL" id="CR861453">
    <property type="protein sequence ID" value="CAH93509.1"/>
    <property type="molecule type" value="mRNA"/>
</dbReference>
<dbReference type="RefSeq" id="NP_001127051.1">
    <property type="nucleotide sequence ID" value="NM_001133579.1"/>
</dbReference>
<dbReference type="SMR" id="Q5R407"/>
<dbReference type="FunCoup" id="Q5R407">
    <property type="interactions" value="3379"/>
</dbReference>
<dbReference type="STRING" id="9601.ENSPPYP00000004792"/>
<dbReference type="GeneID" id="100174079"/>
<dbReference type="KEGG" id="pon:100174079"/>
<dbReference type="CTD" id="8078"/>
<dbReference type="eggNOG" id="KOG0944">
    <property type="taxonomic scope" value="Eukaryota"/>
</dbReference>
<dbReference type="InParanoid" id="Q5R407"/>
<dbReference type="OrthoDB" id="361536at2759"/>
<dbReference type="Proteomes" id="UP000001595">
    <property type="component" value="Unplaced"/>
</dbReference>
<dbReference type="GO" id="GO:0004843">
    <property type="term" value="F:cysteine-type deubiquitinase activity"/>
    <property type="evidence" value="ECO:0007669"/>
    <property type="project" value="UniProtKB-EC"/>
</dbReference>
<dbReference type="GO" id="GO:0008270">
    <property type="term" value="F:zinc ion binding"/>
    <property type="evidence" value="ECO:0007669"/>
    <property type="project" value="UniProtKB-KW"/>
</dbReference>
<dbReference type="GO" id="GO:0016579">
    <property type="term" value="P:protein deubiquitination"/>
    <property type="evidence" value="ECO:0007669"/>
    <property type="project" value="InterPro"/>
</dbReference>
<dbReference type="GO" id="GO:0006508">
    <property type="term" value="P:proteolysis"/>
    <property type="evidence" value="ECO:0007669"/>
    <property type="project" value="UniProtKB-KW"/>
</dbReference>
<dbReference type="CDD" id="cd02658">
    <property type="entry name" value="Peptidase_C19B"/>
    <property type="match status" value="1"/>
</dbReference>
<dbReference type="CDD" id="cd14383">
    <property type="entry name" value="UBA1_UBP5"/>
    <property type="match status" value="1"/>
</dbReference>
<dbReference type="CDD" id="cd14386">
    <property type="entry name" value="UBA2_UBP5"/>
    <property type="match status" value="1"/>
</dbReference>
<dbReference type="FunFam" id="1.10.8.10:FF:000016">
    <property type="entry name" value="Ubiquitin carboxyl-terminal hydrolase"/>
    <property type="match status" value="1"/>
</dbReference>
<dbReference type="FunFam" id="1.10.8.10:FF:000087">
    <property type="entry name" value="Ubiquitin carboxyl-terminal hydrolase"/>
    <property type="match status" value="1"/>
</dbReference>
<dbReference type="FunFam" id="3.30.40.10:FF:000026">
    <property type="entry name" value="Ubiquitin carboxyl-terminal hydrolase"/>
    <property type="match status" value="1"/>
</dbReference>
<dbReference type="FunFam" id="3.30.40.10:FF:000256">
    <property type="entry name" value="Ubiquitin carboxyl-terminal hydrolase"/>
    <property type="match status" value="1"/>
</dbReference>
<dbReference type="FunFam" id="3.90.70.10:FF:000033">
    <property type="entry name" value="Ubiquitin carboxyl-terminal hydrolase"/>
    <property type="match status" value="1"/>
</dbReference>
<dbReference type="FunFam" id="3.90.70.10:FF:000042">
    <property type="entry name" value="Ubiquitin carboxyl-terminal hydrolase"/>
    <property type="match status" value="1"/>
</dbReference>
<dbReference type="Gene3D" id="3.90.70.10">
    <property type="entry name" value="Cysteine proteinases"/>
    <property type="match status" value="2"/>
</dbReference>
<dbReference type="Gene3D" id="1.10.8.10">
    <property type="entry name" value="DNA helicase RuvA subunit, C-terminal domain"/>
    <property type="match status" value="2"/>
</dbReference>
<dbReference type="Gene3D" id="3.30.40.10">
    <property type="entry name" value="Zinc/RING finger domain, C3HC4 (zinc finger)"/>
    <property type="match status" value="3"/>
</dbReference>
<dbReference type="InterPro" id="IPR038765">
    <property type="entry name" value="Papain-like_cys_pep_sf"/>
</dbReference>
<dbReference type="InterPro" id="IPR001394">
    <property type="entry name" value="Peptidase_C19_UCH"/>
</dbReference>
<dbReference type="InterPro" id="IPR050185">
    <property type="entry name" value="Ub_carboxyl-term_hydrolase"/>
</dbReference>
<dbReference type="InterPro" id="IPR015940">
    <property type="entry name" value="UBA"/>
</dbReference>
<dbReference type="InterPro" id="IPR009060">
    <property type="entry name" value="UBA-like_sf"/>
</dbReference>
<dbReference type="InterPro" id="IPR016652">
    <property type="entry name" value="Ubiquitinyl_hydrolase"/>
</dbReference>
<dbReference type="InterPro" id="IPR041432">
    <property type="entry name" value="UBP13_Znf-UBP_var"/>
</dbReference>
<dbReference type="InterPro" id="IPR041812">
    <property type="entry name" value="UBP5_UBA1"/>
</dbReference>
<dbReference type="InterPro" id="IPR018200">
    <property type="entry name" value="USP_CS"/>
</dbReference>
<dbReference type="InterPro" id="IPR028889">
    <property type="entry name" value="USP_dom"/>
</dbReference>
<dbReference type="InterPro" id="IPR013083">
    <property type="entry name" value="Znf_RING/FYVE/PHD"/>
</dbReference>
<dbReference type="InterPro" id="IPR001607">
    <property type="entry name" value="Znf_UBP"/>
</dbReference>
<dbReference type="PANTHER" id="PTHR21646">
    <property type="entry name" value="UBIQUITIN CARBOXYL-TERMINAL HYDROLASE"/>
    <property type="match status" value="1"/>
</dbReference>
<dbReference type="PANTHER" id="PTHR21646:SF103">
    <property type="entry name" value="UBIQUITIN CARBOXYL-TERMINAL HYDROLASE"/>
    <property type="match status" value="1"/>
</dbReference>
<dbReference type="Pfam" id="PF22562">
    <property type="entry name" value="UBA_7"/>
    <property type="match status" value="2"/>
</dbReference>
<dbReference type="Pfam" id="PF00443">
    <property type="entry name" value="UCH"/>
    <property type="match status" value="1"/>
</dbReference>
<dbReference type="Pfam" id="PF02148">
    <property type="entry name" value="zf-UBP"/>
    <property type="match status" value="1"/>
</dbReference>
<dbReference type="Pfam" id="PF17807">
    <property type="entry name" value="zf-UBP_var"/>
    <property type="match status" value="1"/>
</dbReference>
<dbReference type="PIRSF" id="PIRSF016308">
    <property type="entry name" value="UBP"/>
    <property type="match status" value="1"/>
</dbReference>
<dbReference type="SMART" id="SM00165">
    <property type="entry name" value="UBA"/>
    <property type="match status" value="2"/>
</dbReference>
<dbReference type="SMART" id="SM00290">
    <property type="entry name" value="ZnF_UBP"/>
    <property type="match status" value="1"/>
</dbReference>
<dbReference type="SUPFAM" id="SSF54001">
    <property type="entry name" value="Cysteine proteinases"/>
    <property type="match status" value="1"/>
</dbReference>
<dbReference type="SUPFAM" id="SSF57850">
    <property type="entry name" value="RING/U-box"/>
    <property type="match status" value="1"/>
</dbReference>
<dbReference type="SUPFAM" id="SSF46934">
    <property type="entry name" value="UBA-like"/>
    <property type="match status" value="1"/>
</dbReference>
<dbReference type="PROSITE" id="PS50030">
    <property type="entry name" value="UBA"/>
    <property type="match status" value="2"/>
</dbReference>
<dbReference type="PROSITE" id="PS00973">
    <property type="entry name" value="USP_2"/>
    <property type="match status" value="1"/>
</dbReference>
<dbReference type="PROSITE" id="PS50235">
    <property type="entry name" value="USP_3"/>
    <property type="match status" value="1"/>
</dbReference>
<dbReference type="PROSITE" id="PS50271">
    <property type="entry name" value="ZF_UBP"/>
    <property type="match status" value="1"/>
</dbReference>
<gene>
    <name type="primary">UBP5</name>
</gene>
<comment type="function">
    <text evidence="2 3">Deubiquitinating enzyme that participates in a wide range of cellular processes by specifically cleaving isopeptide bonds between ubiquitin and substrate proteins or ubiquitin itself. Affects thereby important cellular signaling pathways such as NF-kappa-B, Wnt/beta-catenin, and cytokine production by regulating ubiquitin-dependent protein degradation. Participates in the activation of the Wnt signaling pathway by promoting FOXM1 deubiquitination and stabilization that induces the recruitment of beta-catenin to Wnt target gene promoter. Regulates the assembly and disassembly of heat-induced stress granules by mediating the hydrolysis of unanchored ubiquitin chains. Promotes lipopolysaccharide-induced apoptosis and inflammatory response by stabilizing the TXNIP protein. Affects T-cell biology by stabilizing the inhibitory receptor on T-cells PDC1. Acts as a negative regulator of autophagy by regulating ULK1 at both protein and mRNA levels. Acts also as a negative regulator of type I interferon production by simultaneously removing both 'Lys-48'-linked unanchored and 'Lys-63'-linked anchored polyubiquitin chains on the transcription factor IRF3. Modulates the stability of DNA mismatch repair protein MLH1 and counteracts the effect of the ubiquitin ligase UBR4. Upon activation by insulin, it gets phosphorylated through mTORC1-mediated phosphorylation to enhance YTHDF1 stability by removing 'Lys-11'-linked polyubiquitination (By similarity). May also deubiquitinate other substrates such as the calcium channel CACNA1H (By similarity).</text>
</comment>
<comment type="catalytic activity">
    <reaction evidence="2">
        <text>Thiol-dependent hydrolysis of ester, thioester, amide, peptide and isopeptide bonds formed by the C-terminal Gly of ubiquitin (a 76-residue protein attached to proteins as an intracellular targeting signal).</text>
        <dbReference type="EC" id="3.4.19.12"/>
    </reaction>
</comment>
<comment type="subunit">
    <text evidence="3">Homodimer. Interacts with TRIML1.</text>
</comment>
<comment type="subcellular location">
    <subcellularLocation>
        <location evidence="2">Cytoplasm</location>
    </subcellularLocation>
    <subcellularLocation>
        <location evidence="2">Cytoplasm</location>
        <location evidence="2">Stress granule</location>
    </subcellularLocation>
    <subcellularLocation>
        <location evidence="2">Nucleus</location>
    </subcellularLocation>
</comment>
<comment type="PTM">
    <text evidence="2">Ubiquitinated by SMURF1; leading to proteasomal degradation.</text>
</comment>
<comment type="PTM">
    <text evidence="3">SUMOylated at Lys-113; SUMOylation affects the interaction with Cav3.2 channels.</text>
</comment>
<comment type="similarity">
    <text evidence="8">Belongs to the peptidase C19 family.</text>
</comment>
<reference key="1">
    <citation type="submission" date="2004-11" db="EMBL/GenBank/DDBJ databases">
        <authorList>
            <consortium name="The German cDNA consortium"/>
        </authorList>
    </citation>
    <scope>NUCLEOTIDE SEQUENCE [LARGE SCALE MRNA]</scope>
    <source>
        <tissue>Brain cortex</tissue>
    </source>
</reference>
<accession>Q5R407</accession>
<name>UBP5_PONAB</name>
<protein>
    <recommendedName>
        <fullName>Ubiquitin carboxyl-terminal hydrolase 5</fullName>
        <ecNumber>3.4.19.12</ecNumber>
    </recommendedName>
    <alternativeName>
        <fullName>Deubiquitinating enzyme 5</fullName>
    </alternativeName>
    <alternativeName>
        <fullName>Ubiquitin thioesterase 5</fullName>
    </alternativeName>
    <alternativeName>
        <fullName>Ubiquitin-specific-processing protease 5</fullName>
    </alternativeName>
</protein>
<evidence type="ECO:0000250" key="1"/>
<evidence type="ECO:0000250" key="2">
    <source>
        <dbReference type="UniProtKB" id="P45974"/>
    </source>
</evidence>
<evidence type="ECO:0000250" key="3">
    <source>
        <dbReference type="UniProtKB" id="P56399"/>
    </source>
</evidence>
<evidence type="ECO:0000255" key="4">
    <source>
        <dbReference type="PROSITE-ProRule" id="PRU00212"/>
    </source>
</evidence>
<evidence type="ECO:0000255" key="5">
    <source>
        <dbReference type="PROSITE-ProRule" id="PRU00502"/>
    </source>
</evidence>
<evidence type="ECO:0000255" key="6">
    <source>
        <dbReference type="PROSITE-ProRule" id="PRU10093"/>
    </source>
</evidence>
<evidence type="ECO:0000256" key="7">
    <source>
        <dbReference type="SAM" id="MobiDB-lite"/>
    </source>
</evidence>
<evidence type="ECO:0000305" key="8"/>
<feature type="initiator methionine" description="Removed" evidence="2">
    <location>
        <position position="1"/>
    </location>
</feature>
<feature type="chain" id="PRO_0000330479" description="Ubiquitin carboxyl-terminal hydrolase 5">
    <location>
        <begin position="2"/>
        <end position="858"/>
    </location>
</feature>
<feature type="domain" description="USP">
    <location>
        <begin position="326"/>
        <end position="856"/>
    </location>
</feature>
<feature type="domain" description="UBA 1" evidence="4">
    <location>
        <begin position="654"/>
        <end position="695"/>
    </location>
</feature>
<feature type="domain" description="UBA 2" evidence="4">
    <location>
        <begin position="722"/>
        <end position="762"/>
    </location>
</feature>
<feature type="zinc finger region" description="UBP-type; degenerate" evidence="5">
    <location>
        <begin position="175"/>
        <end position="283"/>
    </location>
</feature>
<feature type="region of interest" description="Disordered" evidence="7">
    <location>
        <begin position="74"/>
        <end position="96"/>
    </location>
</feature>
<feature type="active site" description="Nucleophile" evidence="6">
    <location>
        <position position="335"/>
    </location>
</feature>
<feature type="active site" description="Proton acceptor" evidence="6">
    <location>
        <position position="818"/>
    </location>
</feature>
<feature type="binding site" evidence="5">
    <location>
        <position position="199"/>
    </location>
    <ligand>
        <name>Zn(2+)</name>
        <dbReference type="ChEBI" id="CHEBI:29105"/>
    </ligand>
</feature>
<feature type="binding site" evidence="5">
    <location>
        <position position="202"/>
    </location>
    <ligand>
        <name>Zn(2+)</name>
        <dbReference type="ChEBI" id="CHEBI:29105"/>
    </ligand>
</feature>
<feature type="binding site" evidence="1">
    <location>
        <position position="209"/>
    </location>
    <ligand>
        <name>substrate</name>
    </ligand>
</feature>
<feature type="binding site" evidence="5">
    <location>
        <position position="219"/>
    </location>
    <ligand>
        <name>Zn(2+)</name>
        <dbReference type="ChEBI" id="CHEBI:29105"/>
    </ligand>
</feature>
<feature type="binding site" evidence="1">
    <location>
        <begin position="221"/>
        <end position="224"/>
    </location>
    <ligand>
        <name>substrate</name>
    </ligand>
</feature>
<feature type="binding site" evidence="5">
    <location>
        <position position="232"/>
    </location>
    <ligand>
        <name>Zn(2+)</name>
        <dbReference type="ChEBI" id="CHEBI:29105"/>
    </ligand>
</feature>
<feature type="binding site" evidence="1">
    <location>
        <position position="259"/>
    </location>
    <ligand>
        <name>substrate</name>
    </ligand>
</feature>
<feature type="binding site" evidence="1">
    <location>
        <position position="261"/>
    </location>
    <ligand>
        <name>substrate</name>
    </ligand>
</feature>
<feature type="binding site" evidence="1">
    <location>
        <position position="264"/>
    </location>
    <ligand>
        <name>substrate</name>
    </ligand>
</feature>
<feature type="modified residue" description="N-acetylalanine" evidence="2">
    <location>
        <position position="2"/>
    </location>
</feature>
<feature type="modified residue" description="Phosphoserine" evidence="2">
    <location>
        <position position="149"/>
    </location>
</feature>
<feature type="modified residue" description="Phosphoserine" evidence="2">
    <location>
        <position position="156"/>
    </location>
</feature>
<feature type="modified residue" description="Phosphothreonine" evidence="2">
    <location>
        <position position="292"/>
    </location>
</feature>
<feature type="modified residue" description="Phosphothreonine" evidence="3">
    <location>
        <position position="623"/>
    </location>
</feature>
<feature type="modified residue" description="Phosphoserine" evidence="2">
    <location>
        <position position="779"/>
    </location>
</feature>
<feature type="modified residue" description="Phosphoserine" evidence="2">
    <location>
        <position position="783"/>
    </location>
</feature>
<feature type="modified residue" description="Phosphoserine" evidence="2">
    <location>
        <position position="785"/>
    </location>
</feature>
<feature type="disulfide bond" evidence="1">
    <location>
        <begin position="195"/>
        <end position="816"/>
    </location>
</feature>
<feature type="cross-link" description="Glycyl lysine isopeptide (Lys-Gly) (interchain with G-Cter in SUMO)" evidence="3">
    <location>
        <position position="113"/>
    </location>
</feature>
<sequence length="858" mass="95771">MAELSEEALLSVLPTIRVPKAGDRVHKDECAFSFDTPESEGGLYICMNTFLGFGKQYVERHFNKTGPRVYLHLRRTRRPKEEDPTTGTGDPPRKKPTRLAIGVEGGFDLSEEKFELDEDVKIVILPDYLEIARDGLGGLPDIVRDRVTSAVEALLSADSASRKQEVQAWDGEVRQVSKHAFSLKQLDNPARIPPCGWECSKCDMRENLWLNLTDGSILCGRRYFDGSGGNNHAVEHYRETGYPLAVKLGTITPDGADVYSYDEDDMVLDPSLAEHLSHFGIDMLKMQKTDKTMTELEIDMNQRIGEWELIQESGVPLKPLFGPGYTGIRNLGNSCYLNSVVLVLFSIPDFQRKYVDKLEKIFQNAPTDPTQDFSTQVAKLGHGLLSGEYSKPVPESGDGERVPEQKEVQDGIAPRMFKALIGKGHPEFSTNRQQDAQEFFLHLINMVERNCRSSENPNEVFRFLVEEKIKCLATEKVKYTQRVDYIMQLPVPMDAALNKEELLEYEEKKRQAEEEKMALPELVRAQVPFSSCLEAYGAPEQVDDFWSTALQAKSVAVKTTRFASFPDYLVIQIKKFTFGLDWVPKKLDVSIEMPEELDISQLRGTGLQPGEEELPDIAPPLVTPDEPKGSLGFYGNEDEDSFCSPHFSSPTSPMLDESVIIQLVEMGFPMDACRKAVYYTGNSGAEAAMNWVMSHMDDPDFANPLILPGSSGPGSTSAAADPPPEDCVTTIVSMGFSRDQALKALRATNNSLERAVDWIFSHIDDLDAEAAMDISEGRSAADSISESVPVGPKVRDGPGKYQLFAFISHMGTSTMCGHYVCHIKKEGRWVIYNDQKVCASEKPPKDLGYIYFYQRVAS</sequence>
<organism>
    <name type="scientific">Pongo abelii</name>
    <name type="common">Sumatran orangutan</name>
    <name type="synonym">Pongo pygmaeus abelii</name>
    <dbReference type="NCBI Taxonomy" id="9601"/>
    <lineage>
        <taxon>Eukaryota</taxon>
        <taxon>Metazoa</taxon>
        <taxon>Chordata</taxon>
        <taxon>Craniata</taxon>
        <taxon>Vertebrata</taxon>
        <taxon>Euteleostomi</taxon>
        <taxon>Mammalia</taxon>
        <taxon>Eutheria</taxon>
        <taxon>Euarchontoglires</taxon>
        <taxon>Primates</taxon>
        <taxon>Haplorrhini</taxon>
        <taxon>Catarrhini</taxon>
        <taxon>Hominidae</taxon>
        <taxon>Pongo</taxon>
    </lineage>
</organism>
<keyword id="KW-0007">Acetylation</keyword>
<keyword id="KW-0963">Cytoplasm</keyword>
<keyword id="KW-1015">Disulfide bond</keyword>
<keyword id="KW-0378">Hydrolase</keyword>
<keyword id="KW-1017">Isopeptide bond</keyword>
<keyword id="KW-0479">Metal-binding</keyword>
<keyword id="KW-0539">Nucleus</keyword>
<keyword id="KW-0597">Phosphoprotein</keyword>
<keyword id="KW-0645">Protease</keyword>
<keyword id="KW-1185">Reference proteome</keyword>
<keyword id="KW-0677">Repeat</keyword>
<keyword id="KW-0788">Thiol protease</keyword>
<keyword id="KW-0832">Ubl conjugation</keyword>
<keyword id="KW-0833">Ubl conjugation pathway</keyword>
<keyword id="KW-0862">Zinc</keyword>
<keyword id="KW-0863">Zinc-finger</keyword>
<proteinExistence type="evidence at transcript level"/>